<proteinExistence type="inferred from homology"/>
<sequence>MNEFQTESFVSLKPYDLVKVNRGAYVGSLEARASDPIPPAYIFEGPGTLITTAGQYSLVRWHLIPAPDVWLATAQLEAYSED</sequence>
<geneLocation type="organellar chromatophore"/>
<keyword id="KW-0472">Membrane</keyword>
<keyword id="KW-0520">NAD</keyword>
<keyword id="KW-0521">NADP</keyword>
<keyword id="KW-0994">Organellar chromatophore</keyword>
<keyword id="KW-0934">Plastid</keyword>
<keyword id="KW-0618">Plastoquinone</keyword>
<keyword id="KW-0874">Quinone</keyword>
<keyword id="KW-0793">Thylakoid</keyword>
<keyword id="KW-1278">Translocase</keyword>
<organism>
    <name type="scientific">Paulinella chromatophora</name>
    <dbReference type="NCBI Taxonomy" id="39717"/>
    <lineage>
        <taxon>Eukaryota</taxon>
        <taxon>Sar</taxon>
        <taxon>Rhizaria</taxon>
        <taxon>Cercozoa</taxon>
        <taxon>Imbricatea</taxon>
        <taxon>Silicofilosea</taxon>
        <taxon>Euglyphida</taxon>
        <taxon>Paulinellidae</taxon>
        <taxon>Paulinella</taxon>
    </lineage>
</organism>
<dbReference type="EC" id="7.1.1.-" evidence="2"/>
<dbReference type="EMBL" id="CP000815">
    <property type="protein sequence ID" value="ACB42739.1"/>
    <property type="molecule type" value="Genomic_DNA"/>
</dbReference>
<dbReference type="RefSeq" id="YP_002048949.1">
    <property type="nucleotide sequence ID" value="NC_011087.1"/>
</dbReference>
<dbReference type="SMR" id="B1X470"/>
<dbReference type="GeneID" id="6481371"/>
<dbReference type="GO" id="GO:0070118">
    <property type="term" value="C:organellar chromatophore thylakoid membrane"/>
    <property type="evidence" value="ECO:0007669"/>
    <property type="project" value="UniProtKB-SubCell"/>
</dbReference>
<dbReference type="GO" id="GO:0005886">
    <property type="term" value="C:plasma membrane"/>
    <property type="evidence" value="ECO:0007669"/>
    <property type="project" value="InterPro"/>
</dbReference>
<dbReference type="GO" id="GO:0009536">
    <property type="term" value="C:plastid"/>
    <property type="evidence" value="ECO:0007669"/>
    <property type="project" value="UniProtKB-KW"/>
</dbReference>
<dbReference type="GO" id="GO:0016655">
    <property type="term" value="F:oxidoreductase activity, acting on NAD(P)H, quinone or similar compound as acceptor"/>
    <property type="evidence" value="ECO:0007669"/>
    <property type="project" value="UniProtKB-UniRule"/>
</dbReference>
<dbReference type="GO" id="GO:0048038">
    <property type="term" value="F:quinone binding"/>
    <property type="evidence" value="ECO:0007669"/>
    <property type="project" value="UniProtKB-KW"/>
</dbReference>
<dbReference type="HAMAP" id="MF_01354">
    <property type="entry name" value="NDH1_NDH1O"/>
    <property type="match status" value="1"/>
</dbReference>
<dbReference type="InterPro" id="IPR020905">
    <property type="entry name" value="NdhO"/>
</dbReference>
<dbReference type="Pfam" id="PF11910">
    <property type="entry name" value="NdhO"/>
    <property type="match status" value="1"/>
</dbReference>
<evidence type="ECO:0000250" key="1"/>
<evidence type="ECO:0000255" key="2">
    <source>
        <dbReference type="HAMAP-Rule" id="MF_01354"/>
    </source>
</evidence>
<name>NDHO_PAUCH</name>
<feature type="chain" id="PRO_0000353664" description="NAD(P)H-quinone oxidoreductase subunit O, organellar chromatophore">
    <location>
        <begin position="1"/>
        <end position="82"/>
    </location>
</feature>
<accession>B1X470</accession>
<comment type="function">
    <text evidence="2">NDH-1 shuttles electrons from an unknown electron donor, via FMN and iron-sulfur (Fe-S) centers, to quinones in the respiratory and/or the photosynthetic chain. The immediate electron acceptor for the enzyme in this species is believed to be plastoquinone. Couples the redox reaction to proton translocation, and thus conserves the redox energy in a proton gradient. Cyanobacterial NDH-1 also plays a role in inorganic carbon-concentration.</text>
</comment>
<comment type="catalytic activity">
    <reaction evidence="2">
        <text>a plastoquinone + NADH + (n+1) H(+)(in) = a plastoquinol + NAD(+) + n H(+)(out)</text>
        <dbReference type="Rhea" id="RHEA:42608"/>
        <dbReference type="Rhea" id="RHEA-COMP:9561"/>
        <dbReference type="Rhea" id="RHEA-COMP:9562"/>
        <dbReference type="ChEBI" id="CHEBI:15378"/>
        <dbReference type="ChEBI" id="CHEBI:17757"/>
        <dbReference type="ChEBI" id="CHEBI:57540"/>
        <dbReference type="ChEBI" id="CHEBI:57945"/>
        <dbReference type="ChEBI" id="CHEBI:62192"/>
    </reaction>
</comment>
<comment type="catalytic activity">
    <reaction evidence="2">
        <text>a plastoquinone + NADPH + (n+1) H(+)(in) = a plastoquinol + NADP(+) + n H(+)(out)</text>
        <dbReference type="Rhea" id="RHEA:42612"/>
        <dbReference type="Rhea" id="RHEA-COMP:9561"/>
        <dbReference type="Rhea" id="RHEA-COMP:9562"/>
        <dbReference type="ChEBI" id="CHEBI:15378"/>
        <dbReference type="ChEBI" id="CHEBI:17757"/>
        <dbReference type="ChEBI" id="CHEBI:57783"/>
        <dbReference type="ChEBI" id="CHEBI:58349"/>
        <dbReference type="ChEBI" id="CHEBI:62192"/>
    </reaction>
</comment>
<comment type="subunit">
    <text evidence="2">NDH-1 can be composed of about 15 different subunits; different subcomplexes with different compositions have been identified which probably have different functions.</text>
</comment>
<comment type="subcellular location">
    <subcellularLocation>
        <location evidence="1">Plastid</location>
        <location evidence="1">Organellar chromatophore thylakoid membrane</location>
        <topology evidence="2">Peripheral membrane protein</topology>
        <orientation evidence="2">Cytoplasmic side</orientation>
    </subcellularLocation>
</comment>
<comment type="similarity">
    <text evidence="2">Belongs to the complex I NdhO subunit family.</text>
</comment>
<reference key="1">
    <citation type="journal article" date="2008" name="Curr. Biol.">
        <title>Chromatophore genome sequence of Paulinella sheds light on acquisition of photosynthesis by eukaryotes.</title>
        <authorList>
            <person name="Nowack E.C.M."/>
            <person name="Melkonian M."/>
            <person name="Gloeckner G."/>
        </authorList>
    </citation>
    <scope>NUCLEOTIDE SEQUENCE [LARGE SCALE GENOMIC DNA]</scope>
</reference>
<protein>
    <recommendedName>
        <fullName evidence="2">NAD(P)H-quinone oxidoreductase subunit O, organellar chromatophore</fullName>
        <ecNumber evidence="2">7.1.1.-</ecNumber>
    </recommendedName>
    <alternativeName>
        <fullName evidence="2">NAD(P)H dehydrogenase I subunit O</fullName>
    </alternativeName>
    <alternativeName>
        <fullName>NDH-1 subunit O</fullName>
    </alternativeName>
    <alternativeName>
        <fullName>NDH-O</fullName>
    </alternativeName>
</protein>
<gene>
    <name evidence="2" type="primary">ndhO</name>
    <name type="ordered locus">PCC_0297</name>
</gene>